<comment type="function">
    <text evidence="2 3">Plays an important role in the metabolism of acetone derived from propane oxidation (PubMed:17071761). Catalyzes the oxidation of acetone to methyl acetate (PubMed:17071761, PubMed:30392152). Exhibits high catalytic efficiency towards various linear and cyclic ketones, such as butanone, 2-pentanone, 2-heptanone, 2-octanone, 2-nonanone, 2-decanone, cyclobutanone, cyclopentanone and cyclohexanone (PubMed:17071761, PubMed:30392152). Elicits the highest catalytic efficiency towards butanone and cyclobutanone (PubMed:30392152). Is highly specific for NADPH and cannot use NADH (PubMed:17071761, PubMed:30392152).</text>
</comment>
<comment type="catalytic activity">
    <reaction evidence="2 3">
        <text>acetone + NADPH + O2 + H(+) = methyl acetate + NADP(+) + H2O</text>
        <dbReference type="Rhea" id="RHEA:49988"/>
        <dbReference type="ChEBI" id="CHEBI:15347"/>
        <dbReference type="ChEBI" id="CHEBI:15377"/>
        <dbReference type="ChEBI" id="CHEBI:15378"/>
        <dbReference type="ChEBI" id="CHEBI:15379"/>
        <dbReference type="ChEBI" id="CHEBI:57783"/>
        <dbReference type="ChEBI" id="CHEBI:58349"/>
        <dbReference type="ChEBI" id="CHEBI:77700"/>
        <dbReference type="EC" id="1.14.13.226"/>
    </reaction>
    <physiologicalReaction direction="left-to-right" evidence="2">
        <dbReference type="Rhea" id="RHEA:49989"/>
    </physiologicalReaction>
</comment>
<comment type="cofactor">
    <cofactor evidence="3 7">
        <name>FAD</name>
        <dbReference type="ChEBI" id="CHEBI:57692"/>
    </cofactor>
    <text evidence="1">Binds 1 FAD per subunit.</text>
</comment>
<comment type="biophysicochemical properties">
    <kinetics>
        <KM evidence="3">6.7 uM for NADPH</KM>
        <KM evidence="3">170 uM for acetone</KM>
        <KM evidence="3">0.34 uM for butanone</KM>
        <KM evidence="3">0.37 uM for 2-pentanone</KM>
        <KM evidence="3">1.5 uM for 2-heptanone</KM>
        <KM evidence="3">4.4 uM for 3-methylbutanone</KM>
        <KM evidence="3">1500 uM for 2,4-dimethyl-3-pentanone</KM>
        <KM evidence="3">1.5 uM for cyclobutanone</KM>
        <KM evidence="3">120 uM for cyclopentanone</KM>
        <KM evidence="3">2400 uM for cyclohexanone</KM>
        <KM evidence="3">6.7 uM for bicyclo[3.2.0]hept-2-en-6-one</KM>
        <KM evidence="3">8.9 uM for phenylacetone</KM>
        <text evidence="3">kcat is 2.0 sec(-1) with NADPH as substrate. kcat is 1.4 sec(-1) with acetone as substrate. kcat is 2.1 sec(-1) with butanone as substrate. kcat is 1.9 sec(-1) with 2-pentanone as substrate. kcat is 3.9 sec(-1) with 2-heptanone as substrate. kcat is 2.2 sec(-1) with 3-methylbutanone as substrate. kcat is 1.5 sec(-1) with 2,4-dimethyl-3-pentanone as substrate. kcat is 2.0 sec(-1) with cyclobutanone as substrate. kcat is 4.3 sec(-1) with cyclopentanone as substrate. kcat is 3.6 sec(-1) with cyclohexanone as substrate. kcat is 1.5 sec(-1) with bicyclo[3.2.0]hept-2-en-6-one as substrate. kcat is 1.0 sec(-1) with phenylacetone as substrate.</text>
    </kinetics>
    <phDependence>
        <text evidence="2 3">Optimum pH is 8.0-8.5 (PubMed:17071761). Optimum pH is 7.0-8.0 (PubMed:30392152).</text>
    </phDependence>
    <temperatureDependence>
        <text evidence="2">Optimum temperature is 35 degrees Celsius.</text>
    </temperatureDependence>
</comment>
<comment type="subunit">
    <text evidence="2">Homotetramer.</text>
</comment>
<comment type="induction">
    <text evidence="2">Induced by propane, 2-propanol and acetone.</text>
</comment>
<comment type="similarity">
    <text evidence="6">Belongs to the FAD-binding monooxygenase family.</text>
</comment>
<feature type="initiator methionine" description="Removed" evidence="2">
    <location>
        <position position="1"/>
    </location>
</feature>
<feature type="chain" id="PRO_0000453642" description="Acetone monooxygenase (methyl acetate-forming)">
    <location>
        <begin position="2"/>
        <end position="533"/>
    </location>
</feature>
<feature type="binding site" evidence="1">
    <location>
        <begin position="43"/>
        <end position="46"/>
    </location>
    <ligand>
        <name>FAD</name>
        <dbReference type="ChEBI" id="CHEBI:57692"/>
    </ligand>
</feature>
<feature type="binding site" evidence="1">
    <location>
        <begin position="53"/>
        <end position="55"/>
    </location>
    <ligand>
        <name>NADP(+)</name>
        <dbReference type="ChEBI" id="CHEBI:58349"/>
    </ligand>
</feature>
<feature type="binding site" evidence="1">
    <location>
        <begin position="55"/>
        <end position="56"/>
    </location>
    <ligand>
        <name>FAD</name>
        <dbReference type="ChEBI" id="CHEBI:57692"/>
    </ligand>
</feature>
<feature type="binding site" evidence="1">
    <location>
        <position position="61"/>
    </location>
    <ligand>
        <name>FAD</name>
        <dbReference type="ChEBI" id="CHEBI:57692"/>
    </ligand>
</feature>
<feature type="binding site" evidence="1">
    <location>
        <begin position="183"/>
        <end position="189"/>
    </location>
    <ligand>
        <name>NADP(+)</name>
        <dbReference type="ChEBI" id="CHEBI:58349"/>
    </ligand>
</feature>
<feature type="binding site" evidence="1">
    <location>
        <begin position="206"/>
        <end position="207"/>
    </location>
    <ligand>
        <name>NADP(+)</name>
        <dbReference type="ChEBI" id="CHEBI:58349"/>
    </ligand>
</feature>
<feature type="binding site" evidence="1">
    <location>
        <position position="492"/>
    </location>
    <ligand>
        <name>NADP(+)</name>
        <dbReference type="ChEBI" id="CHEBI:58349"/>
    </ligand>
</feature>
<feature type="mutagenesis site" description="6-fold decrease in Km for NADPH." evidence="3">
    <original>H</original>
    <variation>K</variation>
    <location>
        <position position="325"/>
    </location>
</feature>
<feature type="sequence conflict" description="In Ref. 1; AA sequence." evidence="6" ref="1">
    <location>
        <begin position="23"/>
        <end position="25"/>
    </location>
</feature>
<reference key="1">
    <citation type="journal article" date="2007" name="J. Bacteriol.">
        <title>Novel acetone metabolism in a propane-utilizing bacterium, Gordonia sp. strain TY-5.</title>
        <authorList>
            <person name="Kotani T."/>
            <person name="Yurimoto H."/>
            <person name="Kato N."/>
            <person name="Sakai Y."/>
        </authorList>
    </citation>
    <scope>NUCLEOTIDE SEQUENCE [GENOMIC DNA]</scope>
    <scope>PROTEIN SEQUENCE OF 2-31</scope>
    <scope>FUNCTION</scope>
    <scope>CATALYTIC ACTIVITY</scope>
    <scope>COFACTOR</scope>
    <scope>BIOPHYSICOCHEMICAL PROPERTIES</scope>
    <scope>SUBUNIT</scope>
    <scope>INDUCTION</scope>
    <source>
        <strain>TY-5</strain>
    </source>
</reference>
<reference key="2">
    <citation type="journal article" date="2018" name="AMB Express">
        <title>Kinetic characterization of acetone monooxygenase from Gordonia sp. strain TY-5.</title>
        <authorList>
            <person name="Fordwour O.B."/>
            <person name="Luka G."/>
            <person name="Hoorfar M."/>
            <person name="Wolthers K.R."/>
        </authorList>
    </citation>
    <scope>NUCLEOTIDE SEQUENCE [MRNA]</scope>
    <scope>FUNCTION</scope>
    <scope>CATALYTIC ACTIVITY</scope>
    <scope>COFACTOR</scope>
    <scope>BIOPHYSICOCHEMICAL PROPERTIES</scope>
    <scope>MUTAGENESIS OF HIS-325</scope>
    <source>
        <strain>TY-5</strain>
    </source>
</reference>
<evidence type="ECO:0000250" key="1">
    <source>
        <dbReference type="UniProtKB" id="H3JQW0"/>
    </source>
</evidence>
<evidence type="ECO:0000269" key="2">
    <source>
    </source>
</evidence>
<evidence type="ECO:0000269" key="3">
    <source>
    </source>
</evidence>
<evidence type="ECO:0000303" key="4">
    <source>
    </source>
</evidence>
<evidence type="ECO:0000303" key="5">
    <source>
    </source>
</evidence>
<evidence type="ECO:0000305" key="6"/>
<evidence type="ECO:0000305" key="7">
    <source>
    </source>
</evidence>
<proteinExistence type="evidence at protein level"/>
<organism>
    <name type="scientific">Gordonia sp. (strain TY-5)</name>
    <dbReference type="NCBI Taxonomy" id="235467"/>
    <lineage>
        <taxon>Bacteria</taxon>
        <taxon>Bacillati</taxon>
        <taxon>Actinomycetota</taxon>
        <taxon>Actinomycetes</taxon>
        <taxon>Mycobacteriales</taxon>
        <taxon>Gordoniaceae</taxon>
        <taxon>Gordonia</taxon>
    </lineage>
</organism>
<keyword id="KW-0903">Direct protein sequencing</keyword>
<keyword id="KW-0274">FAD</keyword>
<keyword id="KW-0285">Flavoprotein</keyword>
<keyword id="KW-0503">Monooxygenase</keyword>
<keyword id="KW-0521">NADP</keyword>
<keyword id="KW-0560">Oxidoreductase</keyword>
<dbReference type="EC" id="1.14.13.226" evidence="2 3"/>
<dbReference type="EMBL" id="AB252677">
    <property type="protein sequence ID" value="BAF43791.1"/>
    <property type="molecule type" value="Genomic_DNA"/>
</dbReference>
<dbReference type="EMBL" id="MH880286">
    <property type="protein sequence ID" value="AYV99719.1"/>
    <property type="molecule type" value="mRNA"/>
</dbReference>
<dbReference type="SMR" id="A1IHE6"/>
<dbReference type="BioCyc" id="MetaCyc:MONOMER-19814"/>
<dbReference type="BRENDA" id="1.14.13.226">
    <property type="organism ID" value="14626"/>
</dbReference>
<dbReference type="GO" id="GO:0050660">
    <property type="term" value="F:flavin adenine dinucleotide binding"/>
    <property type="evidence" value="ECO:0007669"/>
    <property type="project" value="InterPro"/>
</dbReference>
<dbReference type="GO" id="GO:0004499">
    <property type="term" value="F:N,N-dimethylaniline monooxygenase activity"/>
    <property type="evidence" value="ECO:0007669"/>
    <property type="project" value="InterPro"/>
</dbReference>
<dbReference type="GO" id="GO:0050661">
    <property type="term" value="F:NADP binding"/>
    <property type="evidence" value="ECO:0007669"/>
    <property type="project" value="InterPro"/>
</dbReference>
<dbReference type="Gene3D" id="3.50.50.60">
    <property type="entry name" value="FAD/NAD(P)-binding domain"/>
    <property type="match status" value="3"/>
</dbReference>
<dbReference type="InterPro" id="IPR050775">
    <property type="entry name" value="FAD-binding_Monooxygenases"/>
</dbReference>
<dbReference type="InterPro" id="IPR036188">
    <property type="entry name" value="FAD/NAD-bd_sf"/>
</dbReference>
<dbReference type="InterPro" id="IPR020946">
    <property type="entry name" value="Flavin_mOase-like"/>
</dbReference>
<dbReference type="PANTHER" id="PTHR43098">
    <property type="entry name" value="L-ORNITHINE N(5)-MONOOXYGENASE-RELATED"/>
    <property type="match status" value="1"/>
</dbReference>
<dbReference type="PANTHER" id="PTHR43098:SF3">
    <property type="entry name" value="L-ORNITHINE N(5)-MONOOXYGENASE-RELATED"/>
    <property type="match status" value="1"/>
</dbReference>
<dbReference type="Pfam" id="PF00743">
    <property type="entry name" value="FMO-like"/>
    <property type="match status" value="1"/>
</dbReference>
<dbReference type="SUPFAM" id="SSF51905">
    <property type="entry name" value="FAD/NAD(P)-binding domain"/>
    <property type="match status" value="3"/>
</dbReference>
<accession>A1IHE6</accession>
<accession>A0A3G5BIW4</accession>
<protein>
    <recommendedName>
        <fullName evidence="6">Acetone monooxygenase (methyl acetate-forming)</fullName>
        <shortName evidence="5">ACMO</shortName>
        <ecNumber evidence="2 3">1.14.13.226</ecNumber>
    </recommendedName>
    <alternativeName>
        <fullName evidence="4">NADPH-dependent acetone monooxygenase</fullName>
    </alternativeName>
</protein>
<gene>
    <name evidence="4" type="primary">acmA</name>
</gene>
<sequence>MSTTTLDAAVIGTGVAGLYELHMLREQGLEVRAYDKASGVGGTWYWNRYPGARFDSEAYIYQYLFDEDLYKGWSWSQRFPGQEEIERWLNYVADSLDLRRDISLETEITSAVFDEDRNRWTLTTADGDTIDAQFLITCCGMLSAPMKDLFPGQSDFGGQLVHTARWPKEGIDFAGKRVGVIGNGATGIQVIQSIAADVDELKVFIRTPQYALPMKNPSYGPDEVAWYKSRFGELKDTLPHTFTGFEYDFTDAWEDLTPEQRRARLEDDYENGSLKLWLASFAEIFSDEQVSEEVSEFVREKMRARLVDPELCDLLIPSDYGFGTHRVPLETNYLEVYHRDNVTAVLVRDNPITRIRENGIELADGTVHELDVIIMATGFDAGTGALTRIDIRGRDGRTLADDWSRDIRTTMGLMVHGYPNMLTTAVPLAPSAALCNMTTCLQQQTEWISEAIRHLRATGKTVIEPTAEGEEAWVAHHDELADANLISKTNSWYVGSNVPGKPRRVLSYVGGVGAYRDATLEAAAAGYKGFALS</sequence>
<name>ACMA_GORST</name>